<comment type="function">
    <text evidence="1">Essential cell division protein.</text>
</comment>
<comment type="subcellular location">
    <subcellularLocation>
        <location evidence="1">Cell membrane</location>
        <topology evidence="1">Single-pass type II membrane protein</topology>
    </subcellularLocation>
    <text evidence="1">Localizes to the division septum.</text>
</comment>
<comment type="similarity">
    <text evidence="1">Belongs to the FtsQ/DivIB family. FtsQ subfamily.</text>
</comment>
<proteinExistence type="inferred from homology"/>
<evidence type="ECO:0000255" key="1">
    <source>
        <dbReference type="HAMAP-Rule" id="MF_00911"/>
    </source>
</evidence>
<evidence type="ECO:0000255" key="2">
    <source>
        <dbReference type="PROSITE-ProRule" id="PRU01115"/>
    </source>
</evidence>
<evidence type="ECO:0000256" key="3">
    <source>
        <dbReference type="SAM" id="MobiDB-lite"/>
    </source>
</evidence>
<reference key="1">
    <citation type="journal article" date="2010" name="J. Bacteriol.">
        <title>Genome sequence of the milbemycin-producing bacterium Streptomyces bingchenggensis.</title>
        <authorList>
            <person name="Wang X.J."/>
            <person name="Yan Y.J."/>
            <person name="Zhang B."/>
            <person name="An J."/>
            <person name="Wang J.J."/>
            <person name="Tian J."/>
            <person name="Jiang L."/>
            <person name="Chen Y.H."/>
            <person name="Huang S.X."/>
            <person name="Yin M."/>
            <person name="Zhang J."/>
            <person name="Gao A.L."/>
            <person name="Liu C.X."/>
            <person name="Zhu Z.X."/>
            <person name="Xiang W.S."/>
        </authorList>
    </citation>
    <scope>NUCLEOTIDE SEQUENCE [LARGE SCALE GENOMIC DNA]</scope>
    <source>
        <strain>BCW-1</strain>
    </source>
</reference>
<organism>
    <name type="scientific">Streptomyces bingchenggensis (strain BCW-1)</name>
    <dbReference type="NCBI Taxonomy" id="749414"/>
    <lineage>
        <taxon>Bacteria</taxon>
        <taxon>Bacillati</taxon>
        <taxon>Actinomycetota</taxon>
        <taxon>Actinomycetes</taxon>
        <taxon>Kitasatosporales</taxon>
        <taxon>Streptomycetaceae</taxon>
        <taxon>Streptomyces</taxon>
    </lineage>
</organism>
<sequence>MAGATTAKGGARRTPPPGPPPPALKARRRLRLPRRRTLLVTGVATALLGSGVTWLLYGSSWLRVEQVAVSGTAALTPGEVREAAAIPLNEPLAAVDTDSVERRLRARLSRIADVDVSRSWPDTIAVRVTERRPEAIVEKAGKFLEVDEEGVLFATVPQAPKGVPLLQVEADRSPSSRHFGATRLRREAVAVIAQLPEKVRADTLSVRVRSYDSIALGLTRGRTVVWGSSERGAAKAKTLTALMKAVPDAERYDVSAPTAPAVTHS</sequence>
<protein>
    <recommendedName>
        <fullName evidence="1">Cell division protein FtsQ</fullName>
    </recommendedName>
</protein>
<name>FTSQ_STRBB</name>
<dbReference type="EMBL" id="CP002047">
    <property type="protein sequence ID" value="ADI11000.1"/>
    <property type="molecule type" value="Genomic_DNA"/>
</dbReference>
<dbReference type="RefSeq" id="WP_014180450.1">
    <property type="nucleotide sequence ID" value="NC_016582.1"/>
</dbReference>
<dbReference type="SMR" id="D7CEX8"/>
<dbReference type="STRING" id="749414.SBI_07880"/>
<dbReference type="KEGG" id="sbh:SBI_07880"/>
<dbReference type="PATRIC" id="fig|749414.3.peg.8105"/>
<dbReference type="eggNOG" id="COG1589">
    <property type="taxonomic scope" value="Bacteria"/>
</dbReference>
<dbReference type="HOGENOM" id="CLU_047677_1_0_11"/>
<dbReference type="Proteomes" id="UP000000377">
    <property type="component" value="Chromosome"/>
</dbReference>
<dbReference type="GO" id="GO:0032153">
    <property type="term" value="C:cell division site"/>
    <property type="evidence" value="ECO:0007669"/>
    <property type="project" value="UniProtKB-UniRule"/>
</dbReference>
<dbReference type="GO" id="GO:0005886">
    <property type="term" value="C:plasma membrane"/>
    <property type="evidence" value="ECO:0007669"/>
    <property type="project" value="UniProtKB-SubCell"/>
</dbReference>
<dbReference type="GO" id="GO:0090529">
    <property type="term" value="P:cell septum assembly"/>
    <property type="evidence" value="ECO:0007669"/>
    <property type="project" value="InterPro"/>
</dbReference>
<dbReference type="GO" id="GO:0043093">
    <property type="term" value="P:FtsZ-dependent cytokinesis"/>
    <property type="evidence" value="ECO:0007669"/>
    <property type="project" value="UniProtKB-UniRule"/>
</dbReference>
<dbReference type="Gene3D" id="3.10.20.310">
    <property type="entry name" value="membrane protein fhac"/>
    <property type="match status" value="1"/>
</dbReference>
<dbReference type="HAMAP" id="MF_00911">
    <property type="entry name" value="FtsQ_subfam"/>
    <property type="match status" value="1"/>
</dbReference>
<dbReference type="InterPro" id="IPR005548">
    <property type="entry name" value="Cell_div_FtsQ/DivIB_C"/>
</dbReference>
<dbReference type="InterPro" id="IPR026579">
    <property type="entry name" value="FtsQ"/>
</dbReference>
<dbReference type="InterPro" id="IPR050487">
    <property type="entry name" value="FtsQ_DivIB"/>
</dbReference>
<dbReference type="InterPro" id="IPR034746">
    <property type="entry name" value="POTRA"/>
</dbReference>
<dbReference type="InterPro" id="IPR013685">
    <property type="entry name" value="POTRA_FtsQ_type"/>
</dbReference>
<dbReference type="PANTHER" id="PTHR37820">
    <property type="entry name" value="CELL DIVISION PROTEIN DIVIB"/>
    <property type="match status" value="1"/>
</dbReference>
<dbReference type="PANTHER" id="PTHR37820:SF1">
    <property type="entry name" value="CELL DIVISION PROTEIN FTSQ"/>
    <property type="match status" value="1"/>
</dbReference>
<dbReference type="Pfam" id="PF03799">
    <property type="entry name" value="FtsQ_DivIB_C"/>
    <property type="match status" value="1"/>
</dbReference>
<dbReference type="Pfam" id="PF08478">
    <property type="entry name" value="POTRA_1"/>
    <property type="match status" value="1"/>
</dbReference>
<dbReference type="PROSITE" id="PS51779">
    <property type="entry name" value="POTRA"/>
    <property type="match status" value="1"/>
</dbReference>
<keyword id="KW-0131">Cell cycle</keyword>
<keyword id="KW-0132">Cell division</keyword>
<keyword id="KW-1003">Cell membrane</keyword>
<keyword id="KW-0472">Membrane</keyword>
<keyword id="KW-1185">Reference proteome</keyword>
<keyword id="KW-0812">Transmembrane</keyword>
<keyword id="KW-1133">Transmembrane helix</keyword>
<feature type="chain" id="PRO_0000414696" description="Cell division protein FtsQ">
    <location>
        <begin position="1"/>
        <end position="265"/>
    </location>
</feature>
<feature type="topological domain" description="Cytoplasmic" evidence="1">
    <location>
        <begin position="1"/>
        <end position="35"/>
    </location>
</feature>
<feature type="transmembrane region" description="Helical" evidence="1">
    <location>
        <begin position="36"/>
        <end position="58"/>
    </location>
</feature>
<feature type="topological domain" description="Extracellular" evidence="1">
    <location>
        <begin position="59"/>
        <end position="265"/>
    </location>
</feature>
<feature type="domain" description="POTRA" evidence="2">
    <location>
        <begin position="62"/>
        <end position="131"/>
    </location>
</feature>
<feature type="region of interest" description="Disordered" evidence="3">
    <location>
        <begin position="1"/>
        <end position="25"/>
    </location>
</feature>
<feature type="compositionally biased region" description="Low complexity" evidence="3">
    <location>
        <begin position="1"/>
        <end position="13"/>
    </location>
</feature>
<feature type="compositionally biased region" description="Pro residues" evidence="3">
    <location>
        <begin position="14"/>
        <end position="23"/>
    </location>
</feature>
<accession>D7CEX8</accession>
<gene>
    <name evidence="1" type="primary">ftsQ</name>
    <name type="ordered locus">SBI_07880</name>
</gene>